<name>KIZ_MOUSE</name>
<organism>
    <name type="scientific">Mus musculus</name>
    <name type="common">Mouse</name>
    <dbReference type="NCBI Taxonomy" id="10090"/>
    <lineage>
        <taxon>Eukaryota</taxon>
        <taxon>Metazoa</taxon>
        <taxon>Chordata</taxon>
        <taxon>Craniata</taxon>
        <taxon>Vertebrata</taxon>
        <taxon>Euteleostomi</taxon>
        <taxon>Mammalia</taxon>
        <taxon>Eutheria</taxon>
        <taxon>Euarchontoglires</taxon>
        <taxon>Glires</taxon>
        <taxon>Rodentia</taxon>
        <taxon>Myomorpha</taxon>
        <taxon>Muroidea</taxon>
        <taxon>Muridae</taxon>
        <taxon>Murinae</taxon>
        <taxon>Mus</taxon>
        <taxon>Mus</taxon>
    </lineage>
</organism>
<feature type="chain" id="PRO_0000301852" description="Centrosomal protein kizuna">
    <location>
        <begin position="1"/>
        <end position="695"/>
    </location>
</feature>
<feature type="region of interest" description="Disordered" evidence="3">
    <location>
        <begin position="1"/>
        <end position="24"/>
    </location>
</feature>
<feature type="region of interest" description="Disordered" evidence="3">
    <location>
        <begin position="261"/>
        <end position="313"/>
    </location>
</feature>
<feature type="region of interest" description="Disordered" evidence="3">
    <location>
        <begin position="351"/>
        <end position="391"/>
    </location>
</feature>
<feature type="region of interest" description="Disordered" evidence="3">
    <location>
        <begin position="444"/>
        <end position="465"/>
    </location>
</feature>
<feature type="region of interest" description="Disordered" evidence="3">
    <location>
        <begin position="633"/>
        <end position="695"/>
    </location>
</feature>
<feature type="coiled-coil region" evidence="2">
    <location>
        <begin position="29"/>
        <end position="57"/>
    </location>
</feature>
<feature type="coiled-coil region" evidence="2">
    <location>
        <begin position="102"/>
        <end position="132"/>
    </location>
</feature>
<feature type="compositionally biased region" description="Gly residues" evidence="3">
    <location>
        <begin position="1"/>
        <end position="12"/>
    </location>
</feature>
<feature type="compositionally biased region" description="Low complexity" evidence="3">
    <location>
        <begin position="15"/>
        <end position="24"/>
    </location>
</feature>
<feature type="compositionally biased region" description="Polar residues" evidence="3">
    <location>
        <begin position="263"/>
        <end position="274"/>
    </location>
</feature>
<feature type="compositionally biased region" description="Polar residues" evidence="3">
    <location>
        <begin position="282"/>
        <end position="297"/>
    </location>
</feature>
<feature type="compositionally biased region" description="Basic and acidic residues" evidence="3">
    <location>
        <begin position="299"/>
        <end position="313"/>
    </location>
</feature>
<feature type="compositionally biased region" description="Basic and acidic residues" evidence="3">
    <location>
        <begin position="360"/>
        <end position="377"/>
    </location>
</feature>
<feature type="compositionally biased region" description="Low complexity" evidence="3">
    <location>
        <begin position="382"/>
        <end position="391"/>
    </location>
</feature>
<feature type="compositionally biased region" description="Basic and acidic residues" evidence="3">
    <location>
        <begin position="448"/>
        <end position="465"/>
    </location>
</feature>
<feature type="compositionally biased region" description="Low complexity" evidence="3">
    <location>
        <begin position="633"/>
        <end position="645"/>
    </location>
</feature>
<feature type="compositionally biased region" description="Basic and acidic residues" evidence="3">
    <location>
        <begin position="676"/>
        <end position="686"/>
    </location>
</feature>
<feature type="modified residue" description="Phosphothreonine; by PLK1" evidence="1">
    <location>
        <position position="391"/>
    </location>
</feature>
<feature type="modified residue" description="Phosphoserine" evidence="5">
    <location>
        <position position="667"/>
    </location>
</feature>
<feature type="modified residue" description="Phosphoserine" evidence="5">
    <location>
        <position position="670"/>
    </location>
</feature>
<feature type="modified residue" description="Phosphoserine" evidence="1">
    <location>
        <position position="672"/>
    </location>
</feature>
<comment type="function">
    <text evidence="1">Centrosomal protein required for establishing a robust mitotic centrosome architecture that can endure the forces that converge on the centrosomes during spindle formation. Required for stabilizing the expanded pericentriolar material around the centriole.</text>
</comment>
<comment type="subunit">
    <text evidence="1">Interacts with AKAP9, CEP72, ODF2, PCNT and TUBGCP2.</text>
</comment>
<comment type="subcellular location">
    <subcellularLocation>
        <location evidence="1">Cytoplasm</location>
        <location evidence="1">Cytoskeleton</location>
        <location evidence="1">Microtubule organizing center</location>
        <location evidence="1">Centrosome</location>
    </subcellularLocation>
    <subcellularLocation>
        <location evidence="1">Cytoplasm</location>
        <location evidence="1">Cytoskeleton</location>
        <location evidence="1">Cilium basal body</location>
    </subcellularLocation>
    <text evidence="1">Localizes to centrosomes throughout the cell cycle. After centrosome duplication, it usually remains associated only with the mother centrosome, containing the older mature centriole and particles surrounding it. During prophase, additional particles accumulate around both separating centrosomes. Does not accumulate at the microtubule minus ends, but instead localizes to the centrosomes and centrosome- surrounding area in a microtubule-independent and dependent manner, respectively.</text>
</comment>
<comment type="PTM">
    <text evidence="1">Phosphorylation at Thr-391 by PLK1 is not needed for centrosomal localization or pericentriolar material expansion but is indispensable for spindle-pole stabilization.</text>
</comment>
<comment type="similarity">
    <text evidence="4">Belongs to the kizuna family.</text>
</comment>
<comment type="sequence caution" evidence="4">
    <conflict type="erroneous gene model prediction">
        <sequence resource="EMBL-CDS" id="CAM27275"/>
    </conflict>
</comment>
<reference key="1">
    <citation type="journal article" date="2005" name="Science">
        <title>The transcriptional landscape of the mammalian genome.</title>
        <authorList>
            <person name="Carninci P."/>
            <person name="Kasukawa T."/>
            <person name="Katayama S."/>
            <person name="Gough J."/>
            <person name="Frith M.C."/>
            <person name="Maeda N."/>
            <person name="Oyama R."/>
            <person name="Ravasi T."/>
            <person name="Lenhard B."/>
            <person name="Wells C."/>
            <person name="Kodzius R."/>
            <person name="Shimokawa K."/>
            <person name="Bajic V.B."/>
            <person name="Brenner S.E."/>
            <person name="Batalov S."/>
            <person name="Forrest A.R."/>
            <person name="Zavolan M."/>
            <person name="Davis M.J."/>
            <person name="Wilming L.G."/>
            <person name="Aidinis V."/>
            <person name="Allen J.E."/>
            <person name="Ambesi-Impiombato A."/>
            <person name="Apweiler R."/>
            <person name="Aturaliya R.N."/>
            <person name="Bailey T.L."/>
            <person name="Bansal M."/>
            <person name="Baxter L."/>
            <person name="Beisel K.W."/>
            <person name="Bersano T."/>
            <person name="Bono H."/>
            <person name="Chalk A.M."/>
            <person name="Chiu K.P."/>
            <person name="Choudhary V."/>
            <person name="Christoffels A."/>
            <person name="Clutterbuck D.R."/>
            <person name="Crowe M.L."/>
            <person name="Dalla E."/>
            <person name="Dalrymple B.P."/>
            <person name="de Bono B."/>
            <person name="Della Gatta G."/>
            <person name="di Bernardo D."/>
            <person name="Down T."/>
            <person name="Engstrom P."/>
            <person name="Fagiolini M."/>
            <person name="Faulkner G."/>
            <person name="Fletcher C.F."/>
            <person name="Fukushima T."/>
            <person name="Furuno M."/>
            <person name="Futaki S."/>
            <person name="Gariboldi M."/>
            <person name="Georgii-Hemming P."/>
            <person name="Gingeras T.R."/>
            <person name="Gojobori T."/>
            <person name="Green R.E."/>
            <person name="Gustincich S."/>
            <person name="Harbers M."/>
            <person name="Hayashi Y."/>
            <person name="Hensch T.K."/>
            <person name="Hirokawa N."/>
            <person name="Hill D."/>
            <person name="Huminiecki L."/>
            <person name="Iacono M."/>
            <person name="Ikeo K."/>
            <person name="Iwama A."/>
            <person name="Ishikawa T."/>
            <person name="Jakt M."/>
            <person name="Kanapin A."/>
            <person name="Katoh M."/>
            <person name="Kawasawa Y."/>
            <person name="Kelso J."/>
            <person name="Kitamura H."/>
            <person name="Kitano H."/>
            <person name="Kollias G."/>
            <person name="Krishnan S.P."/>
            <person name="Kruger A."/>
            <person name="Kummerfeld S.K."/>
            <person name="Kurochkin I.V."/>
            <person name="Lareau L.F."/>
            <person name="Lazarevic D."/>
            <person name="Lipovich L."/>
            <person name="Liu J."/>
            <person name="Liuni S."/>
            <person name="McWilliam S."/>
            <person name="Madan Babu M."/>
            <person name="Madera M."/>
            <person name="Marchionni L."/>
            <person name="Matsuda H."/>
            <person name="Matsuzawa S."/>
            <person name="Miki H."/>
            <person name="Mignone F."/>
            <person name="Miyake S."/>
            <person name="Morris K."/>
            <person name="Mottagui-Tabar S."/>
            <person name="Mulder N."/>
            <person name="Nakano N."/>
            <person name="Nakauchi H."/>
            <person name="Ng P."/>
            <person name="Nilsson R."/>
            <person name="Nishiguchi S."/>
            <person name="Nishikawa S."/>
            <person name="Nori F."/>
            <person name="Ohara O."/>
            <person name="Okazaki Y."/>
            <person name="Orlando V."/>
            <person name="Pang K.C."/>
            <person name="Pavan W.J."/>
            <person name="Pavesi G."/>
            <person name="Pesole G."/>
            <person name="Petrovsky N."/>
            <person name="Piazza S."/>
            <person name="Reed J."/>
            <person name="Reid J.F."/>
            <person name="Ring B.Z."/>
            <person name="Ringwald M."/>
            <person name="Rost B."/>
            <person name="Ruan Y."/>
            <person name="Salzberg S.L."/>
            <person name="Sandelin A."/>
            <person name="Schneider C."/>
            <person name="Schoenbach C."/>
            <person name="Sekiguchi K."/>
            <person name="Semple C.A."/>
            <person name="Seno S."/>
            <person name="Sessa L."/>
            <person name="Sheng Y."/>
            <person name="Shibata Y."/>
            <person name="Shimada H."/>
            <person name="Shimada K."/>
            <person name="Silva D."/>
            <person name="Sinclair B."/>
            <person name="Sperling S."/>
            <person name="Stupka E."/>
            <person name="Sugiura K."/>
            <person name="Sultana R."/>
            <person name="Takenaka Y."/>
            <person name="Taki K."/>
            <person name="Tammoja K."/>
            <person name="Tan S.L."/>
            <person name="Tang S."/>
            <person name="Taylor M.S."/>
            <person name="Tegner J."/>
            <person name="Teichmann S.A."/>
            <person name="Ueda H.R."/>
            <person name="van Nimwegen E."/>
            <person name="Verardo R."/>
            <person name="Wei C.L."/>
            <person name="Yagi K."/>
            <person name="Yamanishi H."/>
            <person name="Zabarovsky E."/>
            <person name="Zhu S."/>
            <person name="Zimmer A."/>
            <person name="Hide W."/>
            <person name="Bult C."/>
            <person name="Grimmond S.M."/>
            <person name="Teasdale R.D."/>
            <person name="Liu E.T."/>
            <person name="Brusic V."/>
            <person name="Quackenbush J."/>
            <person name="Wahlestedt C."/>
            <person name="Mattick J.S."/>
            <person name="Hume D.A."/>
            <person name="Kai C."/>
            <person name="Sasaki D."/>
            <person name="Tomaru Y."/>
            <person name="Fukuda S."/>
            <person name="Kanamori-Katayama M."/>
            <person name="Suzuki M."/>
            <person name="Aoki J."/>
            <person name="Arakawa T."/>
            <person name="Iida J."/>
            <person name="Imamura K."/>
            <person name="Itoh M."/>
            <person name="Kato T."/>
            <person name="Kawaji H."/>
            <person name="Kawagashira N."/>
            <person name="Kawashima T."/>
            <person name="Kojima M."/>
            <person name="Kondo S."/>
            <person name="Konno H."/>
            <person name="Nakano K."/>
            <person name="Ninomiya N."/>
            <person name="Nishio T."/>
            <person name="Okada M."/>
            <person name="Plessy C."/>
            <person name="Shibata K."/>
            <person name="Shiraki T."/>
            <person name="Suzuki S."/>
            <person name="Tagami M."/>
            <person name="Waki K."/>
            <person name="Watahiki A."/>
            <person name="Okamura-Oho Y."/>
            <person name="Suzuki H."/>
            <person name="Kawai J."/>
            <person name="Hayashizaki Y."/>
        </authorList>
    </citation>
    <scope>NUCLEOTIDE SEQUENCE [LARGE SCALE MRNA]</scope>
    <source>
        <strain>C57BL/6J</strain>
        <tissue>Muellerian duct</tissue>
    </source>
</reference>
<reference key="2">
    <citation type="journal article" date="2009" name="PLoS Biol.">
        <title>Lineage-specific biology revealed by a finished genome assembly of the mouse.</title>
        <authorList>
            <person name="Church D.M."/>
            <person name="Goodstadt L."/>
            <person name="Hillier L.W."/>
            <person name="Zody M.C."/>
            <person name="Goldstein S."/>
            <person name="She X."/>
            <person name="Bult C.J."/>
            <person name="Agarwala R."/>
            <person name="Cherry J.L."/>
            <person name="DiCuccio M."/>
            <person name="Hlavina W."/>
            <person name="Kapustin Y."/>
            <person name="Meric P."/>
            <person name="Maglott D."/>
            <person name="Birtle Z."/>
            <person name="Marques A.C."/>
            <person name="Graves T."/>
            <person name="Zhou S."/>
            <person name="Teague B."/>
            <person name="Potamousis K."/>
            <person name="Churas C."/>
            <person name="Place M."/>
            <person name="Herschleb J."/>
            <person name="Runnheim R."/>
            <person name="Forrest D."/>
            <person name="Amos-Landgraf J."/>
            <person name="Schwartz D.C."/>
            <person name="Cheng Z."/>
            <person name="Lindblad-Toh K."/>
            <person name="Eichler E.E."/>
            <person name="Ponting C.P."/>
        </authorList>
    </citation>
    <scope>NUCLEOTIDE SEQUENCE [LARGE SCALE GENOMIC DNA]</scope>
    <source>
        <strain>C57BL/6J</strain>
    </source>
</reference>
<reference key="3">
    <citation type="journal article" date="2004" name="Genome Res.">
        <title>The status, quality, and expansion of the NIH full-length cDNA project: the Mammalian Gene Collection (MGC).</title>
        <authorList>
            <consortium name="The MGC Project Team"/>
        </authorList>
    </citation>
    <scope>NUCLEOTIDE SEQUENCE [LARGE SCALE MRNA]</scope>
    <source>
        <tissue>Brain</tissue>
    </source>
</reference>
<reference key="4">
    <citation type="submission" date="2009-01" db="UniProtKB">
        <authorList>
            <person name="Lubec G."/>
            <person name="Sunyer B."/>
            <person name="Chen W.-Q."/>
        </authorList>
    </citation>
    <scope>PROTEIN SEQUENCE OF 73-82; 76-87 AND 132-158</scope>
    <scope>IDENTIFICATION BY MASS SPECTROMETRY</scope>
    <source>
        <strain>OF1</strain>
        <tissue>Hippocampus</tissue>
    </source>
</reference>
<reference key="5">
    <citation type="journal article" date="2010" name="Cell">
        <title>A tissue-specific atlas of mouse protein phosphorylation and expression.</title>
        <authorList>
            <person name="Huttlin E.L."/>
            <person name="Jedrychowski M.P."/>
            <person name="Elias J.E."/>
            <person name="Goswami T."/>
            <person name="Rad R."/>
            <person name="Beausoleil S.A."/>
            <person name="Villen J."/>
            <person name="Haas W."/>
            <person name="Sowa M.E."/>
            <person name="Gygi S.P."/>
        </authorList>
    </citation>
    <scope>PHOSPHORYLATION [LARGE SCALE ANALYSIS] AT SER-667 AND SER-670</scope>
    <scope>IDENTIFICATION BY MASS SPECTROMETRY [LARGE SCALE ANALYSIS]</scope>
    <source>
        <tissue>Testis</tissue>
    </source>
</reference>
<dbReference type="EMBL" id="AK135486">
    <property type="protein sequence ID" value="BAE22549.1"/>
    <property type="molecule type" value="mRNA"/>
</dbReference>
<dbReference type="EMBL" id="AL929215">
    <property type="protein sequence ID" value="CAM27275.1"/>
    <property type="status" value="ALT_SEQ"/>
    <property type="molecule type" value="Genomic_DNA"/>
</dbReference>
<dbReference type="EMBL" id="AL929215">
    <property type="protein sequence ID" value="CAM27276.1"/>
    <property type="molecule type" value="Genomic_DNA"/>
</dbReference>
<dbReference type="EMBL" id="BC150844">
    <property type="protein sequence ID" value="AAI50845.1"/>
    <property type="molecule type" value="mRNA"/>
</dbReference>
<dbReference type="EMBL" id="BC150845">
    <property type="protein sequence ID" value="AAI50846.1"/>
    <property type="molecule type" value="mRNA"/>
</dbReference>
<dbReference type="CCDS" id="CCDS16832.1"/>
<dbReference type="RefSeq" id="NP_001028470.1">
    <property type="nucleotide sequence ID" value="NM_001033298.4"/>
</dbReference>
<dbReference type="SMR" id="Q3UXL4"/>
<dbReference type="FunCoup" id="Q3UXL4">
    <property type="interactions" value="787"/>
</dbReference>
<dbReference type="IntAct" id="Q3UXL4">
    <property type="interactions" value="1"/>
</dbReference>
<dbReference type="STRING" id="10090.ENSMUSP00000096884"/>
<dbReference type="iPTMnet" id="Q3UXL4"/>
<dbReference type="PhosphoSitePlus" id="Q3UXL4"/>
<dbReference type="jPOST" id="Q3UXL4"/>
<dbReference type="PaxDb" id="10090-ENSMUSP00000096884"/>
<dbReference type="PeptideAtlas" id="Q3UXL4"/>
<dbReference type="ProteomicsDB" id="263446"/>
<dbReference type="Pumba" id="Q3UXL4"/>
<dbReference type="Antibodypedia" id="24776">
    <property type="antibodies" value="129 antibodies from 25 providers"/>
</dbReference>
<dbReference type="Ensembl" id="ENSMUST00000099278.9">
    <property type="protein sequence ID" value="ENSMUSP00000096884.3"/>
    <property type="gene ID" value="ENSMUSG00000074749.11"/>
</dbReference>
<dbReference type="GeneID" id="228730"/>
<dbReference type="KEGG" id="mmu:228730"/>
<dbReference type="UCSC" id="uc008mso.1">
    <property type="organism name" value="mouse"/>
</dbReference>
<dbReference type="AGR" id="MGI:2684960"/>
<dbReference type="CTD" id="55857"/>
<dbReference type="MGI" id="MGI:2684960">
    <property type="gene designation" value="Kiz"/>
</dbReference>
<dbReference type="VEuPathDB" id="HostDB:ENSMUSG00000074749"/>
<dbReference type="eggNOG" id="ENOG502R72X">
    <property type="taxonomic scope" value="Eukaryota"/>
</dbReference>
<dbReference type="GeneTree" id="ENSGT00390000010121"/>
<dbReference type="HOGENOM" id="CLU_026235_0_0_1"/>
<dbReference type="InParanoid" id="Q3UXL4"/>
<dbReference type="OMA" id="EKEQTHC"/>
<dbReference type="OrthoDB" id="8015657at2759"/>
<dbReference type="PhylomeDB" id="Q3UXL4"/>
<dbReference type="TreeFam" id="TF336086"/>
<dbReference type="BioGRID-ORCS" id="228730">
    <property type="hits" value="3 hits in 78 CRISPR screens"/>
</dbReference>
<dbReference type="ChiTaRS" id="Kiz">
    <property type="organism name" value="mouse"/>
</dbReference>
<dbReference type="PRO" id="PR:Q3UXL4"/>
<dbReference type="Proteomes" id="UP000000589">
    <property type="component" value="Chromosome 2"/>
</dbReference>
<dbReference type="RNAct" id="Q3UXL4">
    <property type="molecule type" value="protein"/>
</dbReference>
<dbReference type="Bgee" id="ENSMUSG00000074749">
    <property type="expression patterns" value="Expressed in interventricular septum and 239 other cell types or tissues"/>
</dbReference>
<dbReference type="ExpressionAtlas" id="Q3UXL4">
    <property type="expression patterns" value="baseline and differential"/>
</dbReference>
<dbReference type="GO" id="GO:0042995">
    <property type="term" value="C:cell projection"/>
    <property type="evidence" value="ECO:0007669"/>
    <property type="project" value="UniProtKB-KW"/>
</dbReference>
<dbReference type="GO" id="GO:0005813">
    <property type="term" value="C:centrosome"/>
    <property type="evidence" value="ECO:0000250"/>
    <property type="project" value="UniProtKB"/>
</dbReference>
<dbReference type="GO" id="GO:0005737">
    <property type="term" value="C:cytoplasm"/>
    <property type="evidence" value="ECO:0000314"/>
    <property type="project" value="MGI"/>
</dbReference>
<dbReference type="GO" id="GO:0019901">
    <property type="term" value="F:protein kinase binding"/>
    <property type="evidence" value="ECO:0007669"/>
    <property type="project" value="Ensembl"/>
</dbReference>
<dbReference type="GO" id="GO:0007051">
    <property type="term" value="P:spindle organization"/>
    <property type="evidence" value="ECO:0000250"/>
    <property type="project" value="UniProtKB"/>
</dbReference>
<dbReference type="InterPro" id="IPR026742">
    <property type="entry name" value="Centrosomal_kizuma"/>
</dbReference>
<dbReference type="PANTHER" id="PTHR16299">
    <property type="entry name" value="CENTROSOMAL PROTEIN KIZUNA"/>
    <property type="match status" value="1"/>
</dbReference>
<dbReference type="PANTHER" id="PTHR16299:SF2">
    <property type="entry name" value="CENTROSOMAL PROTEIN KIZUNA"/>
    <property type="match status" value="1"/>
</dbReference>
<evidence type="ECO:0000250" key="1">
    <source>
        <dbReference type="UniProtKB" id="Q2M2Z5"/>
    </source>
</evidence>
<evidence type="ECO:0000255" key="2"/>
<evidence type="ECO:0000256" key="3">
    <source>
        <dbReference type="SAM" id="MobiDB-lite"/>
    </source>
</evidence>
<evidence type="ECO:0000305" key="4"/>
<evidence type="ECO:0007744" key="5">
    <source>
    </source>
</evidence>
<keyword id="KW-0966">Cell projection</keyword>
<keyword id="KW-0175">Coiled coil</keyword>
<keyword id="KW-0963">Cytoplasm</keyword>
<keyword id="KW-0206">Cytoskeleton</keyword>
<keyword id="KW-0903">Direct protein sequencing</keyword>
<keyword id="KW-0597">Phosphoprotein</keyword>
<keyword id="KW-1185">Reference proteome</keyword>
<sequence>MPRGRGGGGGGLRQASATSAPLASPSYYERVGQLQQALRDSEKKRLDLEDKLYEYNKSDKCRAKLKCAKLKKYLKEVCESERRAQVRNQGYLKKFECVQTYVEHLTTNTEKLQKLKTEYEAEVKRMRLLSKDSLGMSDEDGAKDAVQAGINSGTAMSRGLYQPATIFMGRQMSAISSIEDFSTELKSNQPTKNFSISDPHSHQQTAQSSCVTDSCVVQTNGDTQCLNKSDKIHGKTSLQTGEKAPVTSYVLSAEEQTHCLEIGSSTQHSKSNLSEGRKSAELHSSLQERLSPENSITDLKCDSSSRSEGSDREILTQEHIEVREERAGPLVPMMAASEHCTSAKKWAGEKHSAWEASSDDLDHGDSKSQKAVLKHEEEQEEGSSCSSSDLTVSVSEDDLILESLAALSNPGAKMAGKDGMQALRAAHTEPRQDSLFTEYVLQTQSFPDSKREPSPDSPRQPEKVPDCHLLKTRGQCMKEHDNSLKEEATTLLKKVLTEECDHRSAIHSNESSCSMPSILNDNNGIKEAKPALRLNSVLTREQEVSSGCGDESKEESIAAAPGTGHREADLVPSELFQFSLGAAMKETKAYQLLKKSTLQDNSNQAEERFESQFSGLDIGGSMFTTKTAHKIASEASFSSSEGSPLSRHESKRDPVTTIKSNAFWGESDDSNSEIEAALRPRDHDMPDDFDDFYDT</sequence>
<accession>Q3UXL4</accession>
<accession>A2AUS7</accession>
<accession>B2RX19</accession>
<proteinExistence type="evidence at protein level"/>
<protein>
    <recommendedName>
        <fullName>Centrosomal protein kizuna</fullName>
    </recommendedName>
    <alternativeName>
        <fullName>Polo-like kinase 1 substrate 1</fullName>
    </alternativeName>
</protein>
<gene>
    <name type="primary">Kiz</name>
    <name type="synonym">Gm114</name>
    <name type="synonym">Plk1s1</name>
</gene>